<protein>
    <recommendedName>
        <fullName>RNA-binding protein MEX3A</fullName>
    </recommendedName>
    <alternativeName>
        <fullName>RING finger and KH domain-containing protein 4</fullName>
    </alternativeName>
</protein>
<evidence type="ECO:0000250" key="1"/>
<evidence type="ECO:0000255" key="2">
    <source>
        <dbReference type="PROSITE-ProRule" id="PRU00117"/>
    </source>
</evidence>
<evidence type="ECO:0000255" key="3">
    <source>
        <dbReference type="PROSITE-ProRule" id="PRU00175"/>
    </source>
</evidence>
<evidence type="ECO:0000256" key="4">
    <source>
        <dbReference type="SAM" id="MobiDB-lite"/>
    </source>
</evidence>
<evidence type="ECO:0000269" key="5">
    <source>
    </source>
</evidence>
<evidence type="ECO:0007744" key="6">
    <source>
    </source>
</evidence>
<accession>A1L020</accession>
<dbReference type="EMBL" id="AY950677">
    <property type="protein sequence ID" value="AAY34145.1"/>
    <property type="molecule type" value="mRNA"/>
</dbReference>
<dbReference type="CCDS" id="CCDS53377.1"/>
<dbReference type="RefSeq" id="NP_001087194.1">
    <property type="nucleotide sequence ID" value="NM_001093725.2"/>
</dbReference>
<dbReference type="SMR" id="A1L020"/>
<dbReference type="BioGRID" id="124933">
    <property type="interactions" value="393"/>
</dbReference>
<dbReference type="FunCoup" id="A1L020">
    <property type="interactions" value="543"/>
</dbReference>
<dbReference type="IntAct" id="A1L020">
    <property type="interactions" value="7"/>
</dbReference>
<dbReference type="MINT" id="A1L020"/>
<dbReference type="STRING" id="9606.ENSP00000432845"/>
<dbReference type="GlyGen" id="A1L020">
    <property type="glycosylation" value="3 sites, 1 O-linked glycan (1 site)"/>
</dbReference>
<dbReference type="iPTMnet" id="A1L020"/>
<dbReference type="PhosphoSitePlus" id="A1L020"/>
<dbReference type="BioMuta" id="MEX3A"/>
<dbReference type="jPOST" id="A1L020"/>
<dbReference type="MassIVE" id="A1L020"/>
<dbReference type="PaxDb" id="9606-ENSP00000432845"/>
<dbReference type="PeptideAtlas" id="A1L020"/>
<dbReference type="ProteomicsDB" id="128"/>
<dbReference type="Pumba" id="A1L020"/>
<dbReference type="Antibodypedia" id="56937">
    <property type="antibodies" value="53 antibodies from 22 providers"/>
</dbReference>
<dbReference type="DNASU" id="92312"/>
<dbReference type="Ensembl" id="ENST00000532414.3">
    <property type="protein sequence ID" value="ENSP00000432845.1"/>
    <property type="gene ID" value="ENSG00000254726.3"/>
</dbReference>
<dbReference type="GeneID" id="92312"/>
<dbReference type="KEGG" id="hsa:92312"/>
<dbReference type="MANE-Select" id="ENST00000532414.3">
    <property type="protein sequence ID" value="ENSP00000432845.1"/>
    <property type="RefSeq nucleotide sequence ID" value="NM_001093725.2"/>
    <property type="RefSeq protein sequence ID" value="NP_001087194.1"/>
</dbReference>
<dbReference type="UCSC" id="uc001fnd.4">
    <property type="organism name" value="human"/>
</dbReference>
<dbReference type="AGR" id="HGNC:33482"/>
<dbReference type="CTD" id="92312"/>
<dbReference type="DisGeNET" id="92312"/>
<dbReference type="GeneCards" id="MEX3A"/>
<dbReference type="HGNC" id="HGNC:33482">
    <property type="gene designation" value="MEX3A"/>
</dbReference>
<dbReference type="HPA" id="ENSG00000254726">
    <property type="expression patterns" value="Tissue enhanced (ovary)"/>
</dbReference>
<dbReference type="MIM" id="611007">
    <property type="type" value="gene"/>
</dbReference>
<dbReference type="neXtProt" id="NX_A1L020"/>
<dbReference type="OpenTargets" id="ENSG00000254726"/>
<dbReference type="PharmGKB" id="PA162395812"/>
<dbReference type="VEuPathDB" id="HostDB:ENSG00000254726"/>
<dbReference type="eggNOG" id="KOG2113">
    <property type="taxonomic scope" value="Eukaryota"/>
</dbReference>
<dbReference type="GeneTree" id="ENSGT00940000161732"/>
<dbReference type="HOGENOM" id="CLU_025598_0_0_1"/>
<dbReference type="InParanoid" id="A1L020"/>
<dbReference type="OMA" id="SMENRYS"/>
<dbReference type="OrthoDB" id="427410at2759"/>
<dbReference type="PAN-GO" id="A1L020">
    <property type="GO annotations" value="0 GO annotations based on evolutionary models"/>
</dbReference>
<dbReference type="PhylomeDB" id="A1L020"/>
<dbReference type="TreeFam" id="TF315107"/>
<dbReference type="PathwayCommons" id="A1L020"/>
<dbReference type="SignaLink" id="A1L020"/>
<dbReference type="SIGNOR" id="A1L020"/>
<dbReference type="BioGRID-ORCS" id="92312">
    <property type="hits" value="118 hits in 1199 CRISPR screens"/>
</dbReference>
<dbReference type="CD-CODE" id="232F8A39">
    <property type="entry name" value="P-body"/>
</dbReference>
<dbReference type="CD-CODE" id="DEE660B4">
    <property type="entry name" value="Stress granule"/>
</dbReference>
<dbReference type="ChiTaRS" id="MEX3A">
    <property type="organism name" value="human"/>
</dbReference>
<dbReference type="GenomeRNAi" id="92312"/>
<dbReference type="Pharos" id="A1L020">
    <property type="development level" value="Tbio"/>
</dbReference>
<dbReference type="PRO" id="PR:A1L020"/>
<dbReference type="Proteomes" id="UP000005640">
    <property type="component" value="Chromosome 1"/>
</dbReference>
<dbReference type="RNAct" id="A1L020">
    <property type="molecule type" value="protein"/>
</dbReference>
<dbReference type="Bgee" id="ENSG00000254726">
    <property type="expression patterns" value="Expressed in ganglionic eminence and 166 other cell types or tissues"/>
</dbReference>
<dbReference type="GO" id="GO:0005829">
    <property type="term" value="C:cytosol"/>
    <property type="evidence" value="ECO:0000314"/>
    <property type="project" value="HPA"/>
</dbReference>
<dbReference type="GO" id="GO:0005634">
    <property type="term" value="C:nucleus"/>
    <property type="evidence" value="ECO:0007669"/>
    <property type="project" value="UniProtKB-SubCell"/>
</dbReference>
<dbReference type="GO" id="GO:0000932">
    <property type="term" value="C:P-body"/>
    <property type="evidence" value="ECO:0000314"/>
    <property type="project" value="UniProtKB"/>
</dbReference>
<dbReference type="GO" id="GO:0003723">
    <property type="term" value="F:RNA binding"/>
    <property type="evidence" value="ECO:0000314"/>
    <property type="project" value="UniProtKB"/>
</dbReference>
<dbReference type="GO" id="GO:0008270">
    <property type="term" value="F:zinc ion binding"/>
    <property type="evidence" value="ECO:0007669"/>
    <property type="project" value="UniProtKB-KW"/>
</dbReference>
<dbReference type="CDD" id="cd22423">
    <property type="entry name" value="KH-I_MEX3_rpt1"/>
    <property type="match status" value="1"/>
</dbReference>
<dbReference type="CDD" id="cd22424">
    <property type="entry name" value="KH-I_MEX3_rpt2"/>
    <property type="match status" value="1"/>
</dbReference>
<dbReference type="CDD" id="cd16518">
    <property type="entry name" value="RING-HC_MEX3"/>
    <property type="match status" value="1"/>
</dbReference>
<dbReference type="FunFam" id="3.30.40.10:FF:000090">
    <property type="entry name" value="Mex-3 RNA-binding family member C"/>
    <property type="match status" value="1"/>
</dbReference>
<dbReference type="FunFam" id="3.30.1370.10:FF:000012">
    <property type="entry name" value="Mex-3 RNA-binding family member D"/>
    <property type="match status" value="1"/>
</dbReference>
<dbReference type="Gene3D" id="3.30.1370.10">
    <property type="entry name" value="K Homology domain, type 1"/>
    <property type="match status" value="2"/>
</dbReference>
<dbReference type="Gene3D" id="3.30.40.10">
    <property type="entry name" value="Zinc/RING finger domain, C3HC4 (zinc finger)"/>
    <property type="match status" value="1"/>
</dbReference>
<dbReference type="InterPro" id="IPR047228">
    <property type="entry name" value="KH-I_MEX3_rpt1"/>
</dbReference>
<dbReference type="InterPro" id="IPR047226">
    <property type="entry name" value="KH-I_MEX3_rpt2"/>
</dbReference>
<dbReference type="InterPro" id="IPR004087">
    <property type="entry name" value="KH_dom"/>
</dbReference>
<dbReference type="InterPro" id="IPR004088">
    <property type="entry name" value="KH_dom_type_1"/>
</dbReference>
<dbReference type="InterPro" id="IPR036612">
    <property type="entry name" value="KH_dom_type_1_sf"/>
</dbReference>
<dbReference type="InterPro" id="IPR047227">
    <property type="entry name" value="MEX3"/>
</dbReference>
<dbReference type="InterPro" id="IPR001841">
    <property type="entry name" value="Znf_RING"/>
</dbReference>
<dbReference type="InterPro" id="IPR013083">
    <property type="entry name" value="Znf_RING/FYVE/PHD"/>
</dbReference>
<dbReference type="PANTHER" id="PTHR23285">
    <property type="entry name" value="RING FINGER AND KH DOMAIN CONTAINING PROTEIN 1"/>
    <property type="match status" value="1"/>
</dbReference>
<dbReference type="PANTHER" id="PTHR23285:SF2">
    <property type="entry name" value="RNA-BINDING PROTEIN MEX3A"/>
    <property type="match status" value="1"/>
</dbReference>
<dbReference type="Pfam" id="PF00013">
    <property type="entry name" value="KH_1"/>
    <property type="match status" value="2"/>
</dbReference>
<dbReference type="Pfam" id="PF13920">
    <property type="entry name" value="zf-C3HC4_3"/>
    <property type="match status" value="1"/>
</dbReference>
<dbReference type="SMART" id="SM00322">
    <property type="entry name" value="KH"/>
    <property type="match status" value="2"/>
</dbReference>
<dbReference type="SMART" id="SM00184">
    <property type="entry name" value="RING"/>
    <property type="match status" value="1"/>
</dbReference>
<dbReference type="SUPFAM" id="SSF54791">
    <property type="entry name" value="Eukaryotic type KH-domain (KH-domain type I)"/>
    <property type="match status" value="2"/>
</dbReference>
<dbReference type="SUPFAM" id="SSF57850">
    <property type="entry name" value="RING/U-box"/>
    <property type="match status" value="1"/>
</dbReference>
<dbReference type="PROSITE" id="PS50084">
    <property type="entry name" value="KH_TYPE_1"/>
    <property type="match status" value="2"/>
</dbReference>
<dbReference type="PROSITE" id="PS50089">
    <property type="entry name" value="ZF_RING_2"/>
    <property type="match status" value="1"/>
</dbReference>
<sequence>MPSLVVSGIMERNGGFGELGCFGGSAKDRGLLEDERALQLALDQLCLLGLGEPPAPTAGEDGGGGGGGAPAQPAAPPQPAPPPPPAAPPAAPTAAPAAQTPQPPTAPKGASDAKLCALYKEAELRLKGSSNTTECVPVPTSEHVAEIVGRQGCKIKALRAKTNTYIKTPVRGEEPVFMVTGRREDVATARREIISAAEHFSMIRASRNKSGAAFGVAPALPGQVTIRVRVPYRVVGLVVGPKGATIKRIQQQTNTYIITPSRDRDPVFEITGAPGNVERAREEIETHIAVRTGKILEYNNENDFLAGSPDAAIDSRYSDAWRVHQPGCKPLSTFRQNSLGCIGECGVDSGFEAPRLGEQGGDFGYGGYLFPGYGVGKQDVYYGVAETSPPLWAGQENATPTSVLFSSASSSSSSSAKARAGPPGAHRSPATSAGPELAGLPRRPPGEPLQGFSKLGGGGLRSPGGGRDCMVCFESEVTAALVPCGHNLFCMECAVRICERTDPECPVCHITATQAIRIFS</sequence>
<comment type="function">
    <text>RNA binding protein, may be involved in post-transcriptional regulatory mechanisms.</text>
</comment>
<comment type="subcellular location">
    <subcellularLocation>
        <location evidence="5">Cytoplasm</location>
    </subcellularLocation>
    <subcellularLocation>
        <location evidence="5">Nucleus</location>
    </subcellularLocation>
    <subcellularLocation>
        <location evidence="5">Cytoplasm</location>
        <location evidence="5">P-body</location>
    </subcellularLocation>
    <text>Predominantly expressed in the cytoplasm and shuttles between the cytoplasm and the nucleus through the CRM1 export pathway.</text>
</comment>
<comment type="tissue specificity">
    <text evidence="5">Highest levels found in fetal brain and testis. Detected also in thymus, salivary gland and uterus.</text>
</comment>
<comment type="domain">
    <text evidence="1">Binds RNA through its KH domains.</text>
</comment>
<comment type="PTM">
    <text evidence="5">Phosphorylated.</text>
</comment>
<keyword id="KW-0963">Cytoplasm</keyword>
<keyword id="KW-0479">Metal-binding</keyword>
<keyword id="KW-0539">Nucleus</keyword>
<keyword id="KW-0597">Phosphoprotein</keyword>
<keyword id="KW-1267">Proteomics identification</keyword>
<keyword id="KW-1185">Reference proteome</keyword>
<keyword id="KW-0677">Repeat</keyword>
<keyword id="KW-0694">RNA-binding</keyword>
<keyword id="KW-0862">Zinc</keyword>
<keyword id="KW-0863">Zinc-finger</keyword>
<reference key="1">
    <citation type="journal article" date="2007" name="Nucleic Acids Res.">
        <title>Identification and characterization of human Mex-3 proteins, a novel family of evolutionarily conserved RNA-binding proteins differentially localized to processing bodies.</title>
        <authorList>
            <person name="Buchet-Poyau K."/>
            <person name="Courchet J."/>
            <person name="Le Hir H."/>
            <person name="Seraphin B."/>
            <person name="Scoazec J.-Y."/>
            <person name="Duret L."/>
            <person name="Domon-Dell C."/>
            <person name="Freund J.-N."/>
            <person name="Billaud M."/>
        </authorList>
    </citation>
    <scope>NUCLEOTIDE SEQUENCE [MRNA]</scope>
    <scope>SUBCELLULAR LOCATION</scope>
    <scope>PHOSPHORYLATION</scope>
    <scope>TISSUE SPECIFICITY</scope>
</reference>
<reference key="2">
    <citation type="journal article" date="2013" name="J. Proteome Res.">
        <title>Toward a comprehensive characterization of a human cancer cell phosphoproteome.</title>
        <authorList>
            <person name="Zhou H."/>
            <person name="Di Palma S."/>
            <person name="Preisinger C."/>
            <person name="Peng M."/>
            <person name="Polat A.N."/>
            <person name="Heck A.J."/>
            <person name="Mohammed S."/>
        </authorList>
    </citation>
    <scope>PHOSPHORYLATION [LARGE SCALE ANALYSIS] AT SER-338 AND SER-462</scope>
    <scope>IDENTIFICATION BY MASS SPECTROMETRY [LARGE SCALE ANALYSIS]</scope>
    <source>
        <tissue>Cervix carcinoma</tissue>
        <tissue>Erythroleukemia</tissue>
    </source>
</reference>
<proteinExistence type="evidence at protein level"/>
<feature type="chain" id="PRO_0000281013" description="RNA-binding protein MEX3A">
    <location>
        <begin position="1"/>
        <end position="520"/>
    </location>
</feature>
<feature type="domain" description="KH 1" evidence="2">
    <location>
        <begin position="132"/>
        <end position="193"/>
    </location>
</feature>
<feature type="domain" description="KH 2" evidence="2">
    <location>
        <begin position="223"/>
        <end position="284"/>
    </location>
</feature>
<feature type="zinc finger region" description="RING-type" evidence="3">
    <location>
        <begin position="469"/>
        <end position="509"/>
    </location>
</feature>
<feature type="region of interest" description="Disordered" evidence="4">
    <location>
        <begin position="49"/>
        <end position="111"/>
    </location>
</feature>
<feature type="region of interest" description="Disordered" evidence="4">
    <location>
        <begin position="412"/>
        <end position="461"/>
    </location>
</feature>
<feature type="compositionally biased region" description="Gly residues" evidence="4">
    <location>
        <begin position="60"/>
        <end position="69"/>
    </location>
</feature>
<feature type="compositionally biased region" description="Pro residues" evidence="4">
    <location>
        <begin position="73"/>
        <end position="91"/>
    </location>
</feature>
<feature type="modified residue" description="Phosphoserine" evidence="6">
    <location>
        <position position="338"/>
    </location>
</feature>
<feature type="modified residue" description="Phosphoserine" evidence="6">
    <location>
        <position position="462"/>
    </location>
</feature>
<organism>
    <name type="scientific">Homo sapiens</name>
    <name type="common">Human</name>
    <dbReference type="NCBI Taxonomy" id="9606"/>
    <lineage>
        <taxon>Eukaryota</taxon>
        <taxon>Metazoa</taxon>
        <taxon>Chordata</taxon>
        <taxon>Craniata</taxon>
        <taxon>Vertebrata</taxon>
        <taxon>Euteleostomi</taxon>
        <taxon>Mammalia</taxon>
        <taxon>Eutheria</taxon>
        <taxon>Euarchontoglires</taxon>
        <taxon>Primates</taxon>
        <taxon>Haplorrhini</taxon>
        <taxon>Catarrhini</taxon>
        <taxon>Hominidae</taxon>
        <taxon>Homo</taxon>
    </lineage>
</organism>
<name>MEX3A_HUMAN</name>
<gene>
    <name type="primary">MEX3A</name>
    <name type="synonym">RKHD4</name>
</gene>